<accession>B1K3Y3</accession>
<sequence>MKLLRYGPSGQEKPGILDSAGRIRDLSAHVPDLAGDVLSDAGLARLRAIDPATLPLVSGEPRIGACVGHVGKFIGIGLNYADHAAEAGMPVPKEPVVFGKWTSSICGPNDGIDIPKGSVKTDWEVELGVVIGAKCKDVDEARALDYVAGYCVVNDVSEREWQIERGGQWDKGKGFDTFGPIGPWLVTRDEVPDPQRLDLWLEIDGHRYQNGNTRTMVFTVAQLVAYLSTCMTLQPGDVITTGTPPGVGMGVKPSPVFLKAGQTVRLGIEGLGEQLQRTRNAQ</sequence>
<gene>
    <name type="ordered locus">Bcenmc03_4750</name>
</gene>
<evidence type="ECO:0000250" key="1">
    <source>
        <dbReference type="UniProtKB" id="Q6P587"/>
    </source>
</evidence>
<evidence type="ECO:0000305" key="2"/>
<proteinExistence type="inferred from homology"/>
<comment type="cofactor">
    <cofactor evidence="1">
        <name>Mg(2+)</name>
        <dbReference type="ChEBI" id="CHEBI:18420"/>
    </cofactor>
</comment>
<comment type="similarity">
    <text evidence="2">Belongs to the FAH family.</text>
</comment>
<name>UGL_BURO0</name>
<reference key="1">
    <citation type="submission" date="2008-02" db="EMBL/GenBank/DDBJ databases">
        <title>Complete sequence of chromosome 2 of Burkholderia cenocepacia MC0-3.</title>
        <authorList>
            <person name="Copeland A."/>
            <person name="Lucas S."/>
            <person name="Lapidus A."/>
            <person name="Barry K."/>
            <person name="Bruce D."/>
            <person name="Goodwin L."/>
            <person name="Glavina del Rio T."/>
            <person name="Dalin E."/>
            <person name="Tice H."/>
            <person name="Pitluck S."/>
            <person name="Chain P."/>
            <person name="Malfatti S."/>
            <person name="Shin M."/>
            <person name="Vergez L."/>
            <person name="Schmutz J."/>
            <person name="Larimer F."/>
            <person name="Land M."/>
            <person name="Hauser L."/>
            <person name="Kyrpides N."/>
            <person name="Mikhailova N."/>
            <person name="Tiedje J."/>
            <person name="Richardson P."/>
        </authorList>
    </citation>
    <scope>NUCLEOTIDE SEQUENCE [LARGE SCALE GENOMIC DNA]</scope>
    <source>
        <strain>MC0-3</strain>
    </source>
</reference>
<protein>
    <recommendedName>
        <fullName evidence="2">Putative hydrolase Bcenmc03_4750</fullName>
        <ecNumber>3.-.-.-</ecNumber>
    </recommendedName>
</protein>
<keyword id="KW-0378">Hydrolase</keyword>
<keyword id="KW-0460">Magnesium</keyword>
<keyword id="KW-0479">Metal-binding</keyword>
<dbReference type="EC" id="3.-.-.-"/>
<dbReference type="EMBL" id="CP000959">
    <property type="protein sequence ID" value="ACA93880.1"/>
    <property type="molecule type" value="Genomic_DNA"/>
</dbReference>
<dbReference type="RefSeq" id="WP_006480316.1">
    <property type="nucleotide sequence ID" value="NC_010515.1"/>
</dbReference>
<dbReference type="SMR" id="B1K3Y3"/>
<dbReference type="GeneID" id="83051458"/>
<dbReference type="KEGG" id="bcm:Bcenmc03_4750"/>
<dbReference type="HOGENOM" id="CLU_028458_3_4_4"/>
<dbReference type="Proteomes" id="UP000002169">
    <property type="component" value="Chromosome 2"/>
</dbReference>
<dbReference type="GO" id="GO:0016787">
    <property type="term" value="F:hydrolase activity"/>
    <property type="evidence" value="ECO:0007669"/>
    <property type="project" value="UniProtKB-KW"/>
</dbReference>
<dbReference type="GO" id="GO:0046872">
    <property type="term" value="F:metal ion binding"/>
    <property type="evidence" value="ECO:0007669"/>
    <property type="project" value="UniProtKB-KW"/>
</dbReference>
<dbReference type="GO" id="GO:0050385">
    <property type="term" value="F:ureidoglycolate lyase activity"/>
    <property type="evidence" value="ECO:0007669"/>
    <property type="project" value="UniProtKB-EC"/>
</dbReference>
<dbReference type="GO" id="GO:0019628">
    <property type="term" value="P:urate catabolic process"/>
    <property type="evidence" value="ECO:0007669"/>
    <property type="project" value="UniProtKB-UniPathway"/>
</dbReference>
<dbReference type="FunFam" id="3.90.850.10:FF:000002">
    <property type="entry name" value="2-hydroxyhepta-2,4-diene-1,7-dioate isomerase"/>
    <property type="match status" value="1"/>
</dbReference>
<dbReference type="Gene3D" id="3.90.850.10">
    <property type="entry name" value="Fumarylacetoacetase-like, C-terminal domain"/>
    <property type="match status" value="1"/>
</dbReference>
<dbReference type="InterPro" id="IPR051121">
    <property type="entry name" value="FAH"/>
</dbReference>
<dbReference type="InterPro" id="IPR011234">
    <property type="entry name" value="Fumarylacetoacetase-like_C"/>
</dbReference>
<dbReference type="InterPro" id="IPR036663">
    <property type="entry name" value="Fumarylacetoacetase_C_sf"/>
</dbReference>
<dbReference type="PANTHER" id="PTHR42796:SF4">
    <property type="entry name" value="FUMARYLACETOACETATE HYDROLASE DOMAIN-CONTAINING PROTEIN 2A"/>
    <property type="match status" value="1"/>
</dbReference>
<dbReference type="PANTHER" id="PTHR42796">
    <property type="entry name" value="FUMARYLACETOACETATE HYDROLASE DOMAIN-CONTAINING PROTEIN 2A-RELATED"/>
    <property type="match status" value="1"/>
</dbReference>
<dbReference type="Pfam" id="PF01557">
    <property type="entry name" value="FAA_hydrolase"/>
    <property type="match status" value="1"/>
</dbReference>
<dbReference type="SUPFAM" id="SSF56529">
    <property type="entry name" value="FAH"/>
    <property type="match status" value="1"/>
</dbReference>
<feature type="chain" id="PRO_0000371511" description="Putative hydrolase Bcenmc03_4750">
    <location>
        <begin position="1"/>
        <end position="282"/>
    </location>
</feature>
<feature type="binding site" evidence="1">
    <location>
        <position position="124"/>
    </location>
    <ligand>
        <name>Mg(2+)</name>
        <dbReference type="ChEBI" id="CHEBI:18420"/>
    </ligand>
</feature>
<feature type="binding site" evidence="1">
    <location>
        <position position="126"/>
    </location>
    <ligand>
        <name>Mg(2+)</name>
        <dbReference type="ChEBI" id="CHEBI:18420"/>
    </ligand>
</feature>
<feature type="binding site" evidence="1">
    <location>
        <position position="155"/>
    </location>
    <ligand>
        <name>Mg(2+)</name>
        <dbReference type="ChEBI" id="CHEBI:18420"/>
    </ligand>
</feature>
<organism>
    <name type="scientific">Burkholderia orbicola (strain MC0-3)</name>
    <dbReference type="NCBI Taxonomy" id="406425"/>
    <lineage>
        <taxon>Bacteria</taxon>
        <taxon>Pseudomonadati</taxon>
        <taxon>Pseudomonadota</taxon>
        <taxon>Betaproteobacteria</taxon>
        <taxon>Burkholderiales</taxon>
        <taxon>Burkholderiaceae</taxon>
        <taxon>Burkholderia</taxon>
        <taxon>Burkholderia cepacia complex</taxon>
        <taxon>Burkholderia orbicola</taxon>
    </lineage>
</organism>